<gene>
    <name evidence="1" type="primary">ureC</name>
    <name type="ordered locus">SPO1714</name>
</gene>
<reference key="1">
    <citation type="journal article" date="2004" name="Nature">
        <title>Genome sequence of Silicibacter pomeroyi reveals adaptations to the marine environment.</title>
        <authorList>
            <person name="Moran M.A."/>
            <person name="Buchan A."/>
            <person name="Gonzalez J.M."/>
            <person name="Heidelberg J.F."/>
            <person name="Whitman W.B."/>
            <person name="Kiene R.P."/>
            <person name="Henriksen J.R."/>
            <person name="King G.M."/>
            <person name="Belas R."/>
            <person name="Fuqua C."/>
            <person name="Brinkac L.M."/>
            <person name="Lewis M."/>
            <person name="Johri S."/>
            <person name="Weaver B."/>
            <person name="Pai G."/>
            <person name="Eisen J.A."/>
            <person name="Rahe E."/>
            <person name="Sheldon W.M."/>
            <person name="Ye W."/>
            <person name="Miller T.R."/>
            <person name="Carlton J."/>
            <person name="Rasko D.A."/>
            <person name="Paulsen I.T."/>
            <person name="Ren Q."/>
            <person name="Daugherty S.C."/>
            <person name="DeBoy R.T."/>
            <person name="Dodson R.J."/>
            <person name="Durkin A.S."/>
            <person name="Madupu R."/>
            <person name="Nelson W.C."/>
            <person name="Sullivan S.A."/>
            <person name="Rosovitz M.J."/>
            <person name="Haft D.H."/>
            <person name="Selengut J."/>
            <person name="Ward N."/>
        </authorList>
    </citation>
    <scope>NUCLEOTIDE SEQUENCE [LARGE SCALE GENOMIC DNA]</scope>
    <source>
        <strain>ATCC 700808 / DSM 15171 / DSS-3</strain>
    </source>
</reference>
<reference key="2">
    <citation type="journal article" date="2014" name="Stand. Genomic Sci.">
        <title>An updated genome annotation for the model marine bacterium Ruegeria pomeroyi DSS-3.</title>
        <authorList>
            <person name="Rivers A.R."/>
            <person name="Smith C.B."/>
            <person name="Moran M.A."/>
        </authorList>
    </citation>
    <scope>GENOME REANNOTATION</scope>
    <source>
        <strain>ATCC 700808 / DSM 15171 / DSS-3</strain>
    </source>
</reference>
<sequence length="569" mass="60759">MPATISRADYAAMFGPTTGDRLRLADTDLIIEVERDLTTYGEEVKFGGGKVIRDGMGQAQTTRAEGAVDTVITNALIVDHSGIYKADVGLKNGRIAKIGKAGNPDTQPGVDIIVGPGTEAIAGEGRILTAGGFDSHIHFICPQQIEDALHSGLTTMLGGGTGPAHGTLATTCTPGPWHIGRMLQAADAFPMNLAFAGKGNASLPAALEEQVLGGACALKLHEDWGTTPAAIDCCLSVADAMDVQVMIHTDTLNESGFVENTVAAMKGRTIHAFHTEGAGGGHAPDIIKICGEEHVLPSSTNPTRPFTVNTLEEHLDMLMVCHHLDKSIPEDVAFAESRIRRETIAAEDILHDMGAFSIIASDSQAMGRVGEVLIRTWQTADKMRKQRGRLAEETGDNDNFRVRRYIAKYTINPAIAHGIGHEIGSIEEGKRADLVLWNPAFFGVKPEMVLLGGTIVMAQMGDPNASIPTPQPVYSRPMFGAYGRSVENCAVTFVSAAAHEDGIGARLGLAKETLAVTNTRNIGKSHLILNNATPQIEVNPETYEVRADGELLTCQPAEVLPMAQRYFLF</sequence>
<organism>
    <name type="scientific">Ruegeria pomeroyi (strain ATCC 700808 / DSM 15171 / DSS-3)</name>
    <name type="common">Silicibacter pomeroyi</name>
    <dbReference type="NCBI Taxonomy" id="246200"/>
    <lineage>
        <taxon>Bacteria</taxon>
        <taxon>Pseudomonadati</taxon>
        <taxon>Pseudomonadota</taxon>
        <taxon>Alphaproteobacteria</taxon>
        <taxon>Rhodobacterales</taxon>
        <taxon>Roseobacteraceae</taxon>
        <taxon>Ruegeria</taxon>
    </lineage>
</organism>
<accession>Q5LSQ2</accession>
<keyword id="KW-0963">Cytoplasm</keyword>
<keyword id="KW-0378">Hydrolase</keyword>
<keyword id="KW-0479">Metal-binding</keyword>
<keyword id="KW-0533">Nickel</keyword>
<keyword id="KW-1185">Reference proteome</keyword>
<evidence type="ECO:0000255" key="1">
    <source>
        <dbReference type="HAMAP-Rule" id="MF_01953"/>
    </source>
</evidence>
<comment type="catalytic activity">
    <reaction evidence="1">
        <text>urea + 2 H2O + H(+) = hydrogencarbonate + 2 NH4(+)</text>
        <dbReference type="Rhea" id="RHEA:20557"/>
        <dbReference type="ChEBI" id="CHEBI:15377"/>
        <dbReference type="ChEBI" id="CHEBI:15378"/>
        <dbReference type="ChEBI" id="CHEBI:16199"/>
        <dbReference type="ChEBI" id="CHEBI:17544"/>
        <dbReference type="ChEBI" id="CHEBI:28938"/>
        <dbReference type="EC" id="3.5.1.5"/>
    </reaction>
</comment>
<comment type="cofactor">
    <cofactor evidence="1">
        <name>Ni cation</name>
        <dbReference type="ChEBI" id="CHEBI:25516"/>
    </cofactor>
    <text evidence="1">Binds 2 nickel ions per subunit.</text>
</comment>
<comment type="pathway">
    <text evidence="1">Nitrogen metabolism; urea degradation; CO(2) and NH(3) from urea (urease route): step 1/1.</text>
</comment>
<comment type="subunit">
    <text evidence="1">Heterotrimer of UreA (gamma), UreB (beta) and UreC (alpha) subunits. Three heterotrimers associate to form the active enzyme.</text>
</comment>
<comment type="subcellular location">
    <subcellularLocation>
        <location evidence="1">Cytoplasm</location>
    </subcellularLocation>
</comment>
<comment type="PTM">
    <text evidence="1">Carboxylation allows a single lysine to coordinate two nickel ions.</text>
</comment>
<comment type="similarity">
    <text evidence="1">Belongs to the metallo-dependent hydrolases superfamily. Urease alpha subunit family.</text>
</comment>
<dbReference type="EC" id="3.5.1.5" evidence="1"/>
<dbReference type="EMBL" id="CP000031">
    <property type="protein sequence ID" value="AAV94996.1"/>
    <property type="molecule type" value="Genomic_DNA"/>
</dbReference>
<dbReference type="RefSeq" id="WP_011047449.1">
    <property type="nucleotide sequence ID" value="NC_003911.12"/>
</dbReference>
<dbReference type="SMR" id="Q5LSQ2"/>
<dbReference type="STRING" id="246200.SPO1714"/>
<dbReference type="MEROPS" id="M38.982"/>
<dbReference type="PaxDb" id="246200-SPO1714"/>
<dbReference type="KEGG" id="sil:SPO1714"/>
<dbReference type="eggNOG" id="COG0804">
    <property type="taxonomic scope" value="Bacteria"/>
</dbReference>
<dbReference type="HOGENOM" id="CLU_000980_0_0_5"/>
<dbReference type="OrthoDB" id="9802793at2"/>
<dbReference type="UniPathway" id="UPA00258">
    <property type="reaction ID" value="UER00370"/>
</dbReference>
<dbReference type="Proteomes" id="UP000001023">
    <property type="component" value="Chromosome"/>
</dbReference>
<dbReference type="GO" id="GO:0005737">
    <property type="term" value="C:cytoplasm"/>
    <property type="evidence" value="ECO:0007669"/>
    <property type="project" value="UniProtKB-SubCell"/>
</dbReference>
<dbReference type="GO" id="GO:0016151">
    <property type="term" value="F:nickel cation binding"/>
    <property type="evidence" value="ECO:0007669"/>
    <property type="project" value="UniProtKB-UniRule"/>
</dbReference>
<dbReference type="GO" id="GO:0009039">
    <property type="term" value="F:urease activity"/>
    <property type="evidence" value="ECO:0007669"/>
    <property type="project" value="UniProtKB-UniRule"/>
</dbReference>
<dbReference type="GO" id="GO:0043419">
    <property type="term" value="P:urea catabolic process"/>
    <property type="evidence" value="ECO:0007669"/>
    <property type="project" value="UniProtKB-UniRule"/>
</dbReference>
<dbReference type="CDD" id="cd00375">
    <property type="entry name" value="Urease_alpha"/>
    <property type="match status" value="1"/>
</dbReference>
<dbReference type="Gene3D" id="3.20.20.140">
    <property type="entry name" value="Metal-dependent hydrolases"/>
    <property type="match status" value="1"/>
</dbReference>
<dbReference type="Gene3D" id="2.30.40.10">
    <property type="entry name" value="Urease, subunit C, domain 1"/>
    <property type="match status" value="1"/>
</dbReference>
<dbReference type="HAMAP" id="MF_01953">
    <property type="entry name" value="Urease_alpha"/>
    <property type="match status" value="1"/>
</dbReference>
<dbReference type="InterPro" id="IPR006680">
    <property type="entry name" value="Amidohydro-rel"/>
</dbReference>
<dbReference type="InterPro" id="IPR011059">
    <property type="entry name" value="Metal-dep_hydrolase_composite"/>
</dbReference>
<dbReference type="InterPro" id="IPR032466">
    <property type="entry name" value="Metal_Hydrolase"/>
</dbReference>
<dbReference type="InterPro" id="IPR011612">
    <property type="entry name" value="Urease_alpha_N_dom"/>
</dbReference>
<dbReference type="InterPro" id="IPR050112">
    <property type="entry name" value="Urease_alpha_subunit"/>
</dbReference>
<dbReference type="InterPro" id="IPR017950">
    <property type="entry name" value="Urease_AS"/>
</dbReference>
<dbReference type="InterPro" id="IPR005848">
    <property type="entry name" value="Urease_asu"/>
</dbReference>
<dbReference type="InterPro" id="IPR017951">
    <property type="entry name" value="Urease_asu_c"/>
</dbReference>
<dbReference type="InterPro" id="IPR029754">
    <property type="entry name" value="Urease_Ni-bd"/>
</dbReference>
<dbReference type="NCBIfam" id="NF009685">
    <property type="entry name" value="PRK13206.1"/>
    <property type="match status" value="1"/>
</dbReference>
<dbReference type="NCBIfam" id="NF009686">
    <property type="entry name" value="PRK13207.1"/>
    <property type="match status" value="1"/>
</dbReference>
<dbReference type="NCBIfam" id="TIGR01792">
    <property type="entry name" value="urease_alph"/>
    <property type="match status" value="1"/>
</dbReference>
<dbReference type="PANTHER" id="PTHR43440">
    <property type="entry name" value="UREASE"/>
    <property type="match status" value="1"/>
</dbReference>
<dbReference type="PANTHER" id="PTHR43440:SF1">
    <property type="entry name" value="UREASE"/>
    <property type="match status" value="1"/>
</dbReference>
<dbReference type="Pfam" id="PF01979">
    <property type="entry name" value="Amidohydro_1"/>
    <property type="match status" value="1"/>
</dbReference>
<dbReference type="Pfam" id="PF00449">
    <property type="entry name" value="Urease_alpha"/>
    <property type="match status" value="1"/>
</dbReference>
<dbReference type="PRINTS" id="PR01752">
    <property type="entry name" value="UREASE"/>
</dbReference>
<dbReference type="SUPFAM" id="SSF51338">
    <property type="entry name" value="Composite domain of metallo-dependent hydrolases"/>
    <property type="match status" value="2"/>
</dbReference>
<dbReference type="SUPFAM" id="SSF51556">
    <property type="entry name" value="Metallo-dependent hydrolases"/>
    <property type="match status" value="1"/>
</dbReference>
<dbReference type="PROSITE" id="PS01120">
    <property type="entry name" value="UREASE_1"/>
    <property type="match status" value="1"/>
</dbReference>
<dbReference type="PROSITE" id="PS00145">
    <property type="entry name" value="UREASE_2"/>
    <property type="match status" value="1"/>
</dbReference>
<dbReference type="PROSITE" id="PS51368">
    <property type="entry name" value="UREASE_3"/>
    <property type="match status" value="1"/>
</dbReference>
<feature type="chain" id="PRO_0000234180" description="Urease subunit alpha">
    <location>
        <begin position="1"/>
        <end position="569"/>
    </location>
</feature>
<feature type="domain" description="Urease" evidence="1">
    <location>
        <begin position="131"/>
        <end position="569"/>
    </location>
</feature>
<feature type="active site" description="Proton donor" evidence="1">
    <location>
        <position position="322"/>
    </location>
</feature>
<feature type="binding site" evidence="1">
    <location>
        <position position="136"/>
    </location>
    <ligand>
        <name>Ni(2+)</name>
        <dbReference type="ChEBI" id="CHEBI:49786"/>
        <label>1</label>
    </ligand>
</feature>
<feature type="binding site" evidence="1">
    <location>
        <position position="138"/>
    </location>
    <ligand>
        <name>Ni(2+)</name>
        <dbReference type="ChEBI" id="CHEBI:49786"/>
        <label>1</label>
    </ligand>
</feature>
<feature type="binding site" description="via carbamate group" evidence="1">
    <location>
        <position position="219"/>
    </location>
    <ligand>
        <name>Ni(2+)</name>
        <dbReference type="ChEBI" id="CHEBI:49786"/>
        <label>1</label>
    </ligand>
</feature>
<feature type="binding site" description="via carbamate group" evidence="1">
    <location>
        <position position="219"/>
    </location>
    <ligand>
        <name>Ni(2+)</name>
        <dbReference type="ChEBI" id="CHEBI:49786"/>
        <label>2</label>
    </ligand>
</feature>
<feature type="binding site" evidence="1">
    <location>
        <position position="221"/>
    </location>
    <ligand>
        <name>substrate</name>
    </ligand>
</feature>
<feature type="binding site" evidence="1">
    <location>
        <position position="248"/>
    </location>
    <ligand>
        <name>Ni(2+)</name>
        <dbReference type="ChEBI" id="CHEBI:49786"/>
        <label>2</label>
    </ligand>
</feature>
<feature type="binding site" evidence="1">
    <location>
        <position position="274"/>
    </location>
    <ligand>
        <name>Ni(2+)</name>
        <dbReference type="ChEBI" id="CHEBI:49786"/>
        <label>2</label>
    </ligand>
</feature>
<feature type="binding site" evidence="1">
    <location>
        <position position="362"/>
    </location>
    <ligand>
        <name>Ni(2+)</name>
        <dbReference type="ChEBI" id="CHEBI:49786"/>
        <label>1</label>
    </ligand>
</feature>
<feature type="modified residue" description="N6-carboxylysine" evidence="1">
    <location>
        <position position="219"/>
    </location>
</feature>
<proteinExistence type="inferred from homology"/>
<name>URE1_RUEPO</name>
<protein>
    <recommendedName>
        <fullName evidence="1">Urease subunit alpha</fullName>
        <ecNumber evidence="1">3.5.1.5</ecNumber>
    </recommendedName>
    <alternativeName>
        <fullName evidence="1">Urea amidohydrolase subunit alpha</fullName>
    </alternativeName>
</protein>